<evidence type="ECO:0000255" key="1">
    <source>
        <dbReference type="HAMAP-Rule" id="MF_00237"/>
    </source>
</evidence>
<evidence type="ECO:0000256" key="2">
    <source>
        <dbReference type="SAM" id="MobiDB-lite"/>
    </source>
</evidence>
<feature type="chain" id="PRO_0000301160" description="Sec-independent protein translocase protein TatB">
    <location>
        <begin position="1"/>
        <end position="138"/>
    </location>
</feature>
<feature type="transmembrane region" description="Helical" evidence="1">
    <location>
        <begin position="1"/>
        <end position="18"/>
    </location>
</feature>
<feature type="region of interest" description="Disordered" evidence="2">
    <location>
        <begin position="109"/>
        <end position="138"/>
    </location>
</feature>
<feature type="compositionally biased region" description="Basic and acidic residues" evidence="2">
    <location>
        <begin position="118"/>
        <end position="138"/>
    </location>
</feature>
<keyword id="KW-0997">Cell inner membrane</keyword>
<keyword id="KW-1003">Cell membrane</keyword>
<keyword id="KW-0472">Membrane</keyword>
<keyword id="KW-0653">Protein transport</keyword>
<keyword id="KW-0811">Translocation</keyword>
<keyword id="KW-0812">Transmembrane</keyword>
<keyword id="KW-1133">Transmembrane helix</keyword>
<keyword id="KW-0813">Transport</keyword>
<dbReference type="EMBL" id="CP000025">
    <property type="protein sequence ID" value="AAW35808.1"/>
    <property type="molecule type" value="Genomic_DNA"/>
</dbReference>
<dbReference type="RefSeq" id="WP_002852097.1">
    <property type="nucleotide sequence ID" value="NC_003912.7"/>
</dbReference>
<dbReference type="SMR" id="Q5HVJ1"/>
<dbReference type="KEGG" id="cjr:CJE0682"/>
<dbReference type="HOGENOM" id="CLU_086034_0_3_7"/>
<dbReference type="GO" id="GO:0033281">
    <property type="term" value="C:TAT protein transport complex"/>
    <property type="evidence" value="ECO:0007669"/>
    <property type="project" value="UniProtKB-UniRule"/>
</dbReference>
<dbReference type="GO" id="GO:0008320">
    <property type="term" value="F:protein transmembrane transporter activity"/>
    <property type="evidence" value="ECO:0007669"/>
    <property type="project" value="UniProtKB-UniRule"/>
</dbReference>
<dbReference type="GO" id="GO:0043953">
    <property type="term" value="P:protein transport by the Tat complex"/>
    <property type="evidence" value="ECO:0007669"/>
    <property type="project" value="UniProtKB-UniRule"/>
</dbReference>
<dbReference type="Gene3D" id="1.20.5.3310">
    <property type="match status" value="1"/>
</dbReference>
<dbReference type="HAMAP" id="MF_00237">
    <property type="entry name" value="TatB"/>
    <property type="match status" value="1"/>
</dbReference>
<dbReference type="InterPro" id="IPR003369">
    <property type="entry name" value="TatA/B/E"/>
</dbReference>
<dbReference type="InterPro" id="IPR018448">
    <property type="entry name" value="TatB"/>
</dbReference>
<dbReference type="NCBIfam" id="TIGR01410">
    <property type="entry name" value="tatB"/>
    <property type="match status" value="1"/>
</dbReference>
<dbReference type="PANTHER" id="PTHR33162">
    <property type="entry name" value="SEC-INDEPENDENT PROTEIN TRANSLOCASE PROTEIN TATA, CHLOROPLASTIC"/>
    <property type="match status" value="1"/>
</dbReference>
<dbReference type="PANTHER" id="PTHR33162:SF1">
    <property type="entry name" value="SEC-INDEPENDENT PROTEIN TRANSLOCASE PROTEIN TATA, CHLOROPLASTIC"/>
    <property type="match status" value="1"/>
</dbReference>
<dbReference type="Pfam" id="PF02416">
    <property type="entry name" value="TatA_B_E"/>
    <property type="match status" value="1"/>
</dbReference>
<organism>
    <name type="scientific">Campylobacter jejuni (strain RM1221)</name>
    <dbReference type="NCBI Taxonomy" id="195099"/>
    <lineage>
        <taxon>Bacteria</taxon>
        <taxon>Pseudomonadati</taxon>
        <taxon>Campylobacterota</taxon>
        <taxon>Epsilonproteobacteria</taxon>
        <taxon>Campylobacterales</taxon>
        <taxon>Campylobacteraceae</taxon>
        <taxon>Campylobacter</taxon>
    </lineage>
</organism>
<sequence>MSFGEIIVILVVAILVLGPDKLPEAIVQIAKILKAVKRNIDDAKSSIEKEIRINDLKEEAKKYKDEFSSTNENIRKKLSFEEFDDLKRDILDKTKVDLTFDSRDDKVKNNLSGQNLNTEEKPNLSKLETQDKNGKINV</sequence>
<accession>Q5HVJ1</accession>
<protein>
    <recommendedName>
        <fullName evidence="1">Sec-independent protein translocase protein TatB</fullName>
    </recommendedName>
</protein>
<gene>
    <name evidence="1" type="primary">tatB</name>
    <name type="ordered locus">CJE0682</name>
</gene>
<name>TATB_CAMJR</name>
<reference key="1">
    <citation type="journal article" date="2005" name="PLoS Biol.">
        <title>Major structural differences and novel potential virulence mechanisms from the genomes of multiple Campylobacter species.</title>
        <authorList>
            <person name="Fouts D.E."/>
            <person name="Mongodin E.F."/>
            <person name="Mandrell R.E."/>
            <person name="Miller W.G."/>
            <person name="Rasko D.A."/>
            <person name="Ravel J."/>
            <person name="Brinkac L.M."/>
            <person name="DeBoy R.T."/>
            <person name="Parker C.T."/>
            <person name="Daugherty S.C."/>
            <person name="Dodson R.J."/>
            <person name="Durkin A.S."/>
            <person name="Madupu R."/>
            <person name="Sullivan S.A."/>
            <person name="Shetty J.U."/>
            <person name="Ayodeji M.A."/>
            <person name="Shvartsbeyn A."/>
            <person name="Schatz M.C."/>
            <person name="Badger J.H."/>
            <person name="Fraser C.M."/>
            <person name="Nelson K.E."/>
        </authorList>
    </citation>
    <scope>NUCLEOTIDE SEQUENCE [LARGE SCALE GENOMIC DNA]</scope>
    <source>
        <strain>RM1221</strain>
    </source>
</reference>
<proteinExistence type="inferred from homology"/>
<comment type="function">
    <text evidence="1">Part of the twin-arginine translocation (Tat) system that transports large folded proteins containing a characteristic twin-arginine motif in their signal peptide across membranes. Together with TatC, TatB is part of a receptor directly interacting with Tat signal peptides. TatB may form an oligomeric binding site that transiently accommodates folded Tat precursor proteins before their translocation.</text>
</comment>
<comment type="subunit">
    <text evidence="1">The Tat system comprises two distinct complexes: a TatABC complex, containing multiple copies of TatA, TatB and TatC subunits, and a separate TatA complex, containing only TatA subunits. Substrates initially bind to the TatABC complex, which probably triggers association of the separate TatA complex to form the active translocon.</text>
</comment>
<comment type="subcellular location">
    <subcellularLocation>
        <location evidence="1">Cell inner membrane</location>
        <topology evidence="1">Single-pass membrane protein</topology>
    </subcellularLocation>
</comment>
<comment type="similarity">
    <text evidence="1">Belongs to the TatB family.</text>
</comment>